<keyword id="KW-0963">Cytoplasm</keyword>
<keyword id="KW-0285">Flavoprotein</keyword>
<keyword id="KW-0288">FMN</keyword>
<keyword id="KW-0560">Oxidoreductase</keyword>
<keyword id="KW-0665">Pyrimidine biosynthesis</keyword>
<keyword id="KW-1185">Reference proteome</keyword>
<proteinExistence type="inferred from homology"/>
<gene>
    <name type="primary">pyrDA</name>
    <name type="ordered locus">spr0672</name>
</gene>
<organism>
    <name type="scientific">Streptococcus pneumoniae (strain ATCC BAA-255 / R6)</name>
    <dbReference type="NCBI Taxonomy" id="171101"/>
    <lineage>
        <taxon>Bacteria</taxon>
        <taxon>Bacillati</taxon>
        <taxon>Bacillota</taxon>
        <taxon>Bacilli</taxon>
        <taxon>Lactobacillales</taxon>
        <taxon>Streptococcaceae</taxon>
        <taxon>Streptococcus</taxon>
    </lineage>
</organism>
<reference key="1">
    <citation type="journal article" date="2001" name="J. Bacteriol.">
        <title>Genome of the bacterium Streptococcus pneumoniae strain R6.</title>
        <authorList>
            <person name="Hoskins J."/>
            <person name="Alborn W.E. Jr."/>
            <person name="Arnold J."/>
            <person name="Blaszczak L.C."/>
            <person name="Burgett S."/>
            <person name="DeHoff B.S."/>
            <person name="Estrem S.T."/>
            <person name="Fritz L."/>
            <person name="Fu D.-J."/>
            <person name="Fuller W."/>
            <person name="Geringer C."/>
            <person name="Gilmour R."/>
            <person name="Glass J.S."/>
            <person name="Khoja H."/>
            <person name="Kraft A.R."/>
            <person name="Lagace R.E."/>
            <person name="LeBlanc D.J."/>
            <person name="Lee L.N."/>
            <person name="Lefkowitz E.J."/>
            <person name="Lu J."/>
            <person name="Matsushima P."/>
            <person name="McAhren S.M."/>
            <person name="McHenney M."/>
            <person name="McLeaster K."/>
            <person name="Mundy C.W."/>
            <person name="Nicas T.I."/>
            <person name="Norris F.H."/>
            <person name="O'Gara M."/>
            <person name="Peery R.B."/>
            <person name="Robertson G.T."/>
            <person name="Rockey P."/>
            <person name="Sun P.-M."/>
            <person name="Winkler M.E."/>
            <person name="Yang Y."/>
            <person name="Young-Bellido M."/>
            <person name="Zhao G."/>
            <person name="Zook C.A."/>
            <person name="Baltz R.H."/>
            <person name="Jaskunas S.R."/>
            <person name="Rosteck P.R. Jr."/>
            <person name="Skatrud P.L."/>
            <person name="Glass J.I."/>
        </authorList>
    </citation>
    <scope>NUCLEOTIDE SEQUENCE [LARGE SCALE GENOMIC DNA]</scope>
    <source>
        <strain>ATCC BAA-255 / R6</strain>
    </source>
</reference>
<feature type="chain" id="PRO_0000148403" description="Probable dihydroorotate dehydrogenase A (fumarate)">
    <location>
        <begin position="1"/>
        <end position="311"/>
    </location>
</feature>
<feature type="active site" description="Nucleophile">
    <location>
        <position position="131"/>
    </location>
</feature>
<feature type="binding site" evidence="1">
    <location>
        <begin position="45"/>
        <end position="46"/>
    </location>
    <ligand>
        <name>FMN</name>
        <dbReference type="ChEBI" id="CHEBI:58210"/>
    </ligand>
</feature>
<feature type="binding site" evidence="1">
    <location>
        <position position="45"/>
    </location>
    <ligand>
        <name>substrate</name>
    </ligand>
</feature>
<feature type="binding site" evidence="1">
    <location>
        <begin position="69"/>
        <end position="73"/>
    </location>
    <ligand>
        <name>substrate</name>
    </ligand>
</feature>
<feature type="binding site" evidence="1">
    <location>
        <position position="128"/>
    </location>
    <ligand>
        <name>FMN</name>
        <dbReference type="ChEBI" id="CHEBI:58210"/>
    </ligand>
</feature>
<feature type="binding site" evidence="1">
    <location>
        <position position="128"/>
    </location>
    <ligand>
        <name>substrate</name>
    </ligand>
</feature>
<feature type="binding site" evidence="1">
    <location>
        <position position="165"/>
    </location>
    <ligand>
        <name>FMN</name>
        <dbReference type="ChEBI" id="CHEBI:58210"/>
    </ligand>
</feature>
<feature type="binding site" evidence="1">
    <location>
        <position position="193"/>
    </location>
    <ligand>
        <name>FMN</name>
        <dbReference type="ChEBI" id="CHEBI:58210"/>
    </ligand>
</feature>
<feature type="binding site" evidence="1">
    <location>
        <begin position="194"/>
        <end position="195"/>
    </location>
    <ligand>
        <name>substrate</name>
    </ligand>
</feature>
<feature type="binding site" evidence="1">
    <location>
        <position position="220"/>
    </location>
    <ligand>
        <name>FMN</name>
        <dbReference type="ChEBI" id="CHEBI:58210"/>
    </ligand>
</feature>
<feature type="binding site" evidence="1">
    <location>
        <begin position="248"/>
        <end position="249"/>
    </location>
    <ligand>
        <name>FMN</name>
        <dbReference type="ChEBI" id="CHEBI:58210"/>
    </ligand>
</feature>
<feature type="binding site" evidence="1">
    <location>
        <begin position="270"/>
        <end position="271"/>
    </location>
    <ligand>
        <name>FMN</name>
        <dbReference type="ChEBI" id="CHEBI:58210"/>
    </ligand>
</feature>
<accession>Q8DQG9</accession>
<comment type="function">
    <text evidence="1">Catalyzes the conversion of dihydroorotate to orotate with fumarate as the electron acceptor.</text>
</comment>
<comment type="catalytic activity">
    <reaction>
        <text>(S)-dihydroorotate + fumarate = orotate + succinate</text>
        <dbReference type="Rhea" id="RHEA:30059"/>
        <dbReference type="ChEBI" id="CHEBI:29806"/>
        <dbReference type="ChEBI" id="CHEBI:30031"/>
        <dbReference type="ChEBI" id="CHEBI:30839"/>
        <dbReference type="ChEBI" id="CHEBI:30864"/>
        <dbReference type="EC" id="1.3.98.1"/>
    </reaction>
</comment>
<comment type="cofactor">
    <cofactor evidence="1">
        <name>FMN</name>
        <dbReference type="ChEBI" id="CHEBI:58210"/>
    </cofactor>
    <text evidence="1">Binds 1 FMN per subunit.</text>
</comment>
<comment type="pathway">
    <text>Pyrimidine metabolism; UMP biosynthesis via de novo pathway.</text>
</comment>
<comment type="subunit">
    <text evidence="1">Homodimer.</text>
</comment>
<comment type="subcellular location">
    <subcellularLocation>
        <location evidence="1">Cytoplasm</location>
    </subcellularLocation>
</comment>
<comment type="similarity">
    <text evidence="2">Belongs to the dihydroorotate dehydrogenase family. Type 1 subfamily.</text>
</comment>
<evidence type="ECO:0000250" key="1"/>
<evidence type="ECO:0000305" key="2"/>
<dbReference type="EC" id="1.3.98.1"/>
<dbReference type="EMBL" id="AE007317">
    <property type="protein sequence ID" value="AAK99476.1"/>
    <property type="molecule type" value="Genomic_DNA"/>
</dbReference>
<dbReference type="PIR" id="H97955">
    <property type="entry name" value="H97955"/>
</dbReference>
<dbReference type="RefSeq" id="NP_358266.1">
    <property type="nucleotide sequence ID" value="NC_003098.1"/>
</dbReference>
<dbReference type="RefSeq" id="WP_000255162.1">
    <property type="nucleotide sequence ID" value="NC_003098.1"/>
</dbReference>
<dbReference type="SMR" id="Q8DQG9"/>
<dbReference type="STRING" id="171101.spr0672"/>
<dbReference type="KEGG" id="spr:spr0672"/>
<dbReference type="PATRIC" id="fig|171101.6.peg.744"/>
<dbReference type="eggNOG" id="COG0167">
    <property type="taxonomic scope" value="Bacteria"/>
</dbReference>
<dbReference type="HOGENOM" id="CLU_042042_3_0_9"/>
<dbReference type="UniPathway" id="UPA00070"/>
<dbReference type="Proteomes" id="UP000000586">
    <property type="component" value="Chromosome"/>
</dbReference>
<dbReference type="GO" id="GO:0005737">
    <property type="term" value="C:cytoplasm"/>
    <property type="evidence" value="ECO:0000318"/>
    <property type="project" value="GO_Central"/>
</dbReference>
<dbReference type="GO" id="GO:1990663">
    <property type="term" value="F:dihydroorotate dehydrogenase (fumarate) activity"/>
    <property type="evidence" value="ECO:0007669"/>
    <property type="project" value="UniProtKB-EC"/>
</dbReference>
<dbReference type="GO" id="GO:0004152">
    <property type="term" value="F:dihydroorotate dehydrogenase activity"/>
    <property type="evidence" value="ECO:0000318"/>
    <property type="project" value="GO_Central"/>
</dbReference>
<dbReference type="GO" id="GO:0006207">
    <property type="term" value="P:'de novo' pyrimidine nucleobase biosynthetic process"/>
    <property type="evidence" value="ECO:0000318"/>
    <property type="project" value="GO_Central"/>
</dbReference>
<dbReference type="GO" id="GO:0044205">
    <property type="term" value="P:'de novo' UMP biosynthetic process"/>
    <property type="evidence" value="ECO:0007669"/>
    <property type="project" value="UniProtKB-UniRule"/>
</dbReference>
<dbReference type="CDD" id="cd04741">
    <property type="entry name" value="DHOD_1A_like"/>
    <property type="match status" value="1"/>
</dbReference>
<dbReference type="FunFam" id="3.20.20.70:FF:000027">
    <property type="entry name" value="Dihydropyrimidine dehydrogenase [NADP(+)]"/>
    <property type="match status" value="1"/>
</dbReference>
<dbReference type="Gene3D" id="3.20.20.70">
    <property type="entry name" value="Aldolase class I"/>
    <property type="match status" value="1"/>
</dbReference>
<dbReference type="HAMAP" id="MF_00224">
    <property type="entry name" value="DHO_dh_type1"/>
    <property type="match status" value="1"/>
</dbReference>
<dbReference type="InterPro" id="IPR013785">
    <property type="entry name" value="Aldolase_TIM"/>
</dbReference>
<dbReference type="InterPro" id="IPR050074">
    <property type="entry name" value="DHO_dehydrogenase"/>
</dbReference>
<dbReference type="InterPro" id="IPR033886">
    <property type="entry name" value="DHOD_1A"/>
</dbReference>
<dbReference type="InterPro" id="IPR024920">
    <property type="entry name" value="Dihydroorotate_DH_1"/>
</dbReference>
<dbReference type="InterPro" id="IPR012135">
    <property type="entry name" value="Dihydroorotate_DH_1_2"/>
</dbReference>
<dbReference type="InterPro" id="IPR005720">
    <property type="entry name" value="Dihydroorotate_DH_cat"/>
</dbReference>
<dbReference type="InterPro" id="IPR001295">
    <property type="entry name" value="Dihydroorotate_DH_CS"/>
</dbReference>
<dbReference type="NCBIfam" id="NF002702">
    <property type="entry name" value="PRK02506.1"/>
    <property type="match status" value="1"/>
</dbReference>
<dbReference type="PANTHER" id="PTHR48109:SF1">
    <property type="entry name" value="DIHYDROOROTATE DEHYDROGENASE (FUMARATE)"/>
    <property type="match status" value="1"/>
</dbReference>
<dbReference type="PANTHER" id="PTHR48109">
    <property type="entry name" value="DIHYDROOROTATE DEHYDROGENASE (QUINONE), MITOCHONDRIAL-RELATED"/>
    <property type="match status" value="1"/>
</dbReference>
<dbReference type="Pfam" id="PF01180">
    <property type="entry name" value="DHO_dh"/>
    <property type="match status" value="1"/>
</dbReference>
<dbReference type="PIRSF" id="PIRSF000164">
    <property type="entry name" value="DHO_oxidase"/>
    <property type="match status" value="1"/>
</dbReference>
<dbReference type="SUPFAM" id="SSF51395">
    <property type="entry name" value="FMN-linked oxidoreductases"/>
    <property type="match status" value="1"/>
</dbReference>
<dbReference type="PROSITE" id="PS00911">
    <property type="entry name" value="DHODEHASE_1"/>
    <property type="match status" value="1"/>
</dbReference>
<dbReference type="PROSITE" id="PS00912">
    <property type="entry name" value="DHODEHASE_2"/>
    <property type="match status" value="1"/>
</dbReference>
<protein>
    <recommendedName>
        <fullName>Probable dihydroorotate dehydrogenase A (fumarate)</fullName>
        <shortName>DHOD A</shortName>
        <shortName>DHODase A</shortName>
        <shortName>DHOdehase A</shortName>
        <ecNumber>1.3.98.1</ecNumber>
    </recommendedName>
</protein>
<name>PYRDA_STRR6</name>
<sequence>MVSTKTQIAGFEFDNCLMNAAGVACMTIEELEEVKNSAAGTFVTKTATLDFRQGNPEPRYQDVPLGSINSMGLPNNGLDYYLDYLLDLQEKESNRTFFLSLVGMSPEETHTILKKVQESDFRGLTELNLSCPNVPGKPQIAYDFETTDRILAEVFAYFTKPLGIKLPPYFDIVHFDQAAAIFNKYPLKFVNCVNSSGNGLYIEDESVVIRPKNGFGGIGGEYIKPTALANVHAFYQRLNPQIQIIGTGGVLTGRDAFEHILCGASMVQVGTTLHKEGVSAFDRITNELKAIMVEKGYESLEDFRGKLRYID</sequence>